<reference key="1">
    <citation type="journal article" date="2009" name="PLoS Biol.">
        <title>Lineage-specific biology revealed by a finished genome assembly of the mouse.</title>
        <authorList>
            <person name="Church D.M."/>
            <person name="Goodstadt L."/>
            <person name="Hillier L.W."/>
            <person name="Zody M.C."/>
            <person name="Goldstein S."/>
            <person name="She X."/>
            <person name="Bult C.J."/>
            <person name="Agarwala R."/>
            <person name="Cherry J.L."/>
            <person name="DiCuccio M."/>
            <person name="Hlavina W."/>
            <person name="Kapustin Y."/>
            <person name="Meric P."/>
            <person name="Maglott D."/>
            <person name="Birtle Z."/>
            <person name="Marques A.C."/>
            <person name="Graves T."/>
            <person name="Zhou S."/>
            <person name="Teague B."/>
            <person name="Potamousis K."/>
            <person name="Churas C."/>
            <person name="Place M."/>
            <person name="Herschleb J."/>
            <person name="Runnheim R."/>
            <person name="Forrest D."/>
            <person name="Amos-Landgraf J."/>
            <person name="Schwartz D.C."/>
            <person name="Cheng Z."/>
            <person name="Lindblad-Toh K."/>
            <person name="Eichler E.E."/>
            <person name="Ponting C.P."/>
        </authorList>
    </citation>
    <scope>NUCLEOTIDE SEQUENCE [LARGE SCALE GENOMIC DNA]</scope>
    <source>
        <strain>C57BL/6J</strain>
    </source>
</reference>
<reference key="2">
    <citation type="submission" date="2005-07" db="EMBL/GenBank/DDBJ databases">
        <authorList>
            <person name="Mural R.J."/>
            <person name="Adams M.D."/>
            <person name="Myers E.W."/>
            <person name="Smith H.O."/>
            <person name="Venter J.C."/>
        </authorList>
    </citation>
    <scope>NUCLEOTIDE SEQUENCE [LARGE SCALE GENOMIC DNA]</scope>
</reference>
<reference key="3">
    <citation type="journal article" date="2004" name="Genome Res.">
        <title>The status, quality, and expansion of the NIH full-length cDNA project: the Mammalian Gene Collection (MGC).</title>
        <authorList>
            <consortium name="The MGC Project Team"/>
        </authorList>
    </citation>
    <scope>NUCLEOTIDE SEQUENCE [LARGE SCALE MRNA]</scope>
</reference>
<reference key="4">
    <citation type="journal article" date="2013" name="Nat. Genet.">
        <title>DYX1C1 is required for axonemal dynein assembly and ciliary motility.</title>
        <authorList>
            <person name="Tarkar A."/>
            <person name="Loges N.T."/>
            <person name="Slagle C.E."/>
            <person name="Francis R."/>
            <person name="Dougherty G.W."/>
            <person name="Tamayo J.V."/>
            <person name="Shook B."/>
            <person name="Cantino M."/>
            <person name="Schwartz D."/>
            <person name="Jahnke C."/>
            <person name="Olbrich H."/>
            <person name="Werner C."/>
            <person name="Raidt J."/>
            <person name="Pennekamp P."/>
            <person name="Abouhamed M."/>
            <person name="Hjeij R."/>
            <person name="Kohler G."/>
            <person name="Griese M."/>
            <person name="Li Y."/>
            <person name="Lemke K."/>
            <person name="Klena N."/>
            <person name="Liu X."/>
            <person name="Gabriel G."/>
            <person name="Tobita K."/>
            <person name="Jaspers M."/>
            <person name="Morgan L.C."/>
            <person name="Shapiro A.J."/>
            <person name="Letteboer S.J."/>
            <person name="Mans D.A."/>
            <person name="Carson J.L."/>
            <person name="Leigh M.W."/>
            <person name="Wolf W.E."/>
            <person name="Chen S."/>
            <person name="Lucas J.S."/>
            <person name="Onoufriadis A."/>
            <person name="Plagnol V."/>
            <person name="Schmidts M."/>
            <person name="Boldt K."/>
            <person name="Roepman R."/>
            <person name="Zariwala M.A."/>
            <person name="Lo C.W."/>
            <person name="Mitchison H.M."/>
            <person name="Knowles M.R."/>
            <person name="Burdine R.D."/>
            <person name="Loturco J.J."/>
            <person name="Omran H."/>
        </authorList>
    </citation>
    <scope>FUNCTION</scope>
    <scope>SUBCELLULAR LOCATION</scope>
    <scope>INTERACTION WITH CCT3; CCT4; CCT5 AND CCT8</scope>
</reference>
<name>DAAF4_MOUSE</name>
<sequence>MPVRVSEFSWQQTPATIFLSLPLRGVCVRDADVFCGESYLKVNFPPFLFELFLYAPIDDGKSKAKIGNDTILFTLYKKEPVLWDSLSVPGVDKEMMQRIREKSILQAQEKAKEATEAKAVAKREDQRYALGEMMKIEEEERKKIEDMKENERKKATSELEAWKECQKKADGQKRVQRKEKPLEGKQAEETKALKPRGLPRKAPPTRLPTRGRNWENIFPEKLKEDRVPAPRSAGSIQISFTPRVFPTALRESQVAEEEEWLHKQAEARRAMSTDLPEFFDLKEEERNPDWLKDKGNKLFATENYLAAVDAYNLAIRLNCKIPLLYLNRAACHLKLKNLHKAIEDSSKALELLTPPVADNANARMKAHVRRGTAFCQLELYVEGLQDYEAALKIDPANTVVQNDAEKIRNIIQGTALKSRD</sequence>
<keyword id="KW-0966">Cell projection</keyword>
<keyword id="KW-0963">Cytoplasm</keyword>
<keyword id="KW-0524">Neurogenesis</keyword>
<keyword id="KW-0539">Nucleus</keyword>
<keyword id="KW-1185">Reference proteome</keyword>
<keyword id="KW-0677">Repeat</keyword>
<keyword id="KW-0802">TPR repeat</keyword>
<feature type="chain" id="PRO_0000106285" description="Dynein axonemal assembly factor 4">
    <location>
        <begin position="1"/>
        <end position="420"/>
    </location>
</feature>
<feature type="domain" description="CS" evidence="5">
    <location>
        <begin position="3"/>
        <end position="87"/>
    </location>
</feature>
<feature type="repeat" description="TPR 1">
    <location>
        <begin position="288"/>
        <end position="321"/>
    </location>
</feature>
<feature type="repeat" description="TPR 2">
    <location>
        <begin position="322"/>
        <end position="355"/>
    </location>
</feature>
<feature type="repeat" description="TPR 3">
    <location>
        <begin position="364"/>
        <end position="397"/>
    </location>
</feature>
<feature type="region of interest" description="Mediates interaction with ESR1 and STUB1" evidence="1">
    <location>
        <begin position="7"/>
        <end position="103"/>
    </location>
</feature>
<feature type="region of interest" description="Disordered" evidence="6">
    <location>
        <begin position="164"/>
        <end position="212"/>
    </location>
</feature>
<feature type="compositionally biased region" description="Basic and acidic residues" evidence="6">
    <location>
        <begin position="164"/>
        <end position="192"/>
    </location>
</feature>
<feature type="sequence conflict" description="In Ref. 3; AAH26462." evidence="8" ref="3">
    <original>V</original>
    <variation>M</variation>
    <location>
        <position position="88"/>
    </location>
</feature>
<feature type="sequence conflict" description="In Ref. 3; AAH26462." evidence="8" ref="3">
    <original>LEG</original>
    <variation>PER</variation>
    <location>
        <begin position="182"/>
        <end position="184"/>
    </location>
</feature>
<proteinExistence type="evidence at protein level"/>
<evidence type="ECO:0000250" key="1"/>
<evidence type="ECO:0000250" key="2">
    <source>
        <dbReference type="UniProtKB" id="Q5VJS5"/>
    </source>
</evidence>
<evidence type="ECO:0000250" key="3">
    <source>
        <dbReference type="UniProtKB" id="Q6AZN0"/>
    </source>
</evidence>
<evidence type="ECO:0000250" key="4">
    <source>
        <dbReference type="UniProtKB" id="Q8WXU2"/>
    </source>
</evidence>
<evidence type="ECO:0000255" key="5">
    <source>
        <dbReference type="PROSITE-ProRule" id="PRU00547"/>
    </source>
</evidence>
<evidence type="ECO:0000256" key="6">
    <source>
        <dbReference type="SAM" id="MobiDB-lite"/>
    </source>
</evidence>
<evidence type="ECO:0000269" key="7">
    <source>
    </source>
</evidence>
<evidence type="ECO:0000305" key="8"/>
<organism>
    <name type="scientific">Mus musculus</name>
    <name type="common">Mouse</name>
    <dbReference type="NCBI Taxonomy" id="10090"/>
    <lineage>
        <taxon>Eukaryota</taxon>
        <taxon>Metazoa</taxon>
        <taxon>Chordata</taxon>
        <taxon>Craniata</taxon>
        <taxon>Vertebrata</taxon>
        <taxon>Euteleostomi</taxon>
        <taxon>Mammalia</taxon>
        <taxon>Eutheria</taxon>
        <taxon>Euarchontoglires</taxon>
        <taxon>Glires</taxon>
        <taxon>Rodentia</taxon>
        <taxon>Myomorpha</taxon>
        <taxon>Muroidea</taxon>
        <taxon>Muridae</taxon>
        <taxon>Murinae</taxon>
        <taxon>Mus</taxon>
        <taxon>Mus</taxon>
    </lineage>
</organism>
<protein>
    <recommendedName>
        <fullName evidence="4">Dynein axonemal assembly factor 4</fullName>
    </recommendedName>
    <alternativeName>
        <fullName evidence="4">Dyslexia susceptibility 1 candidate gene 1 protein homolog</fullName>
    </alternativeName>
</protein>
<accession>Q8R368</accession>
<accession>G3X916</accession>
<dbReference type="EMBL" id="AC158997">
    <property type="status" value="NOT_ANNOTATED_CDS"/>
    <property type="molecule type" value="Genomic_DNA"/>
</dbReference>
<dbReference type="EMBL" id="CH466522">
    <property type="protein sequence ID" value="EDL26272.1"/>
    <property type="molecule type" value="Genomic_DNA"/>
</dbReference>
<dbReference type="EMBL" id="BC026462">
    <property type="protein sequence ID" value="AAH26462.1"/>
    <property type="molecule type" value="mRNA"/>
</dbReference>
<dbReference type="CCDS" id="CCDS23333.1"/>
<dbReference type="RefSeq" id="NP_080590.3">
    <property type="nucleotide sequence ID" value="NM_026314.3"/>
</dbReference>
<dbReference type="SMR" id="Q8R368"/>
<dbReference type="BioGRID" id="212366">
    <property type="interactions" value="1"/>
</dbReference>
<dbReference type="FunCoup" id="Q8R368">
    <property type="interactions" value="619"/>
</dbReference>
<dbReference type="STRING" id="10090.ENSMUSP00000034734"/>
<dbReference type="PhosphoSitePlus" id="Q8R368"/>
<dbReference type="PaxDb" id="10090-ENSMUSP00000034734"/>
<dbReference type="ProteomicsDB" id="279231"/>
<dbReference type="DNASU" id="67685"/>
<dbReference type="Ensembl" id="ENSMUST00000034734.9">
    <property type="protein sequence ID" value="ENSMUSP00000034734.9"/>
    <property type="gene ID" value="ENSMUSG00000092192.8"/>
</dbReference>
<dbReference type="GeneID" id="67685"/>
<dbReference type="KEGG" id="mmu:67685"/>
<dbReference type="UCSC" id="uc009qqj.2">
    <property type="organism name" value="mouse"/>
</dbReference>
<dbReference type="AGR" id="MGI:1914935"/>
<dbReference type="CTD" id="161582"/>
<dbReference type="MGI" id="MGI:1914935">
    <property type="gene designation" value="Dnaaf4"/>
</dbReference>
<dbReference type="VEuPathDB" id="HostDB:ENSMUSG00000092192"/>
<dbReference type="eggNOG" id="KOG1124">
    <property type="taxonomic scope" value="Eukaryota"/>
</dbReference>
<dbReference type="GeneTree" id="ENSGT00390000004930"/>
<dbReference type="InParanoid" id="Q8R368"/>
<dbReference type="OMA" id="ELAAWHF"/>
<dbReference type="OrthoDB" id="348005at2759"/>
<dbReference type="PhylomeDB" id="Q8R368"/>
<dbReference type="TreeFam" id="TF328983"/>
<dbReference type="BioGRID-ORCS" id="67685">
    <property type="hits" value="1 hit in 79 CRISPR screens"/>
</dbReference>
<dbReference type="ChiTaRS" id="Dnaaf4">
    <property type="organism name" value="mouse"/>
</dbReference>
<dbReference type="PRO" id="PR:Q8R368"/>
<dbReference type="Proteomes" id="UP000000589">
    <property type="component" value="Chromosome 9"/>
</dbReference>
<dbReference type="RNAct" id="Q8R368">
    <property type="molecule type" value="protein"/>
</dbReference>
<dbReference type="Bgee" id="ENSMUSG00000092192">
    <property type="expression patterns" value="Expressed in spermatocyte and 113 other cell types or tissues"/>
</dbReference>
<dbReference type="ExpressionAtlas" id="Q8R368">
    <property type="expression patterns" value="baseline and differential"/>
</dbReference>
<dbReference type="GO" id="GO:0005813">
    <property type="term" value="C:centrosome"/>
    <property type="evidence" value="ECO:0000266"/>
    <property type="project" value="MGI"/>
</dbReference>
<dbReference type="GO" id="GO:0005737">
    <property type="term" value="C:cytoplasm"/>
    <property type="evidence" value="ECO:0000314"/>
    <property type="project" value="UniProtKB"/>
</dbReference>
<dbReference type="GO" id="GO:0005829">
    <property type="term" value="C:cytosol"/>
    <property type="evidence" value="ECO:0007669"/>
    <property type="project" value="Ensembl"/>
</dbReference>
<dbReference type="GO" id="GO:0120293">
    <property type="term" value="C:dynein axonemal particle"/>
    <property type="evidence" value="ECO:0000250"/>
    <property type="project" value="UniProtKB"/>
</dbReference>
<dbReference type="GO" id="GO:0005576">
    <property type="term" value="C:extracellular region"/>
    <property type="evidence" value="ECO:0007669"/>
    <property type="project" value="GOC"/>
</dbReference>
<dbReference type="GO" id="GO:0043005">
    <property type="term" value="C:neuron projection"/>
    <property type="evidence" value="ECO:0007669"/>
    <property type="project" value="UniProtKB-SubCell"/>
</dbReference>
<dbReference type="GO" id="GO:0097730">
    <property type="term" value="C:non-motile cilium"/>
    <property type="evidence" value="ECO:0000266"/>
    <property type="project" value="MGI"/>
</dbReference>
<dbReference type="GO" id="GO:0005634">
    <property type="term" value="C:nucleus"/>
    <property type="evidence" value="ECO:0000250"/>
    <property type="project" value="UniProtKB"/>
</dbReference>
<dbReference type="GO" id="GO:0005886">
    <property type="term" value="C:plasma membrane"/>
    <property type="evidence" value="ECO:0007669"/>
    <property type="project" value="Ensembl"/>
</dbReference>
<dbReference type="GO" id="GO:0030331">
    <property type="term" value="F:nuclear estrogen receptor binding"/>
    <property type="evidence" value="ECO:0000250"/>
    <property type="project" value="UniProtKB"/>
</dbReference>
<dbReference type="GO" id="GO:0003341">
    <property type="term" value="P:cilium movement"/>
    <property type="evidence" value="ECO:0000315"/>
    <property type="project" value="UniProtKB"/>
</dbReference>
<dbReference type="GO" id="GO:0007368">
    <property type="term" value="P:determination of left/right symmetry"/>
    <property type="evidence" value="ECO:0000315"/>
    <property type="project" value="UniProtKB"/>
</dbReference>
<dbReference type="GO" id="GO:0003351">
    <property type="term" value="P:epithelial cilium movement involved in extracellular fluid movement"/>
    <property type="evidence" value="ECO:0000315"/>
    <property type="project" value="MGI"/>
</dbReference>
<dbReference type="GO" id="GO:0051649">
    <property type="term" value="P:establishment of localization in cell"/>
    <property type="evidence" value="ECO:0000315"/>
    <property type="project" value="MGI"/>
</dbReference>
<dbReference type="GO" id="GO:0007507">
    <property type="term" value="P:heart development"/>
    <property type="evidence" value="ECO:0000315"/>
    <property type="project" value="MGI"/>
</dbReference>
<dbReference type="GO" id="GO:0036159">
    <property type="term" value="P:inner dynein arm assembly"/>
    <property type="evidence" value="ECO:0000315"/>
    <property type="project" value="UniProtKB"/>
</dbReference>
<dbReference type="GO" id="GO:0007611">
    <property type="term" value="P:learning or memory"/>
    <property type="evidence" value="ECO:0000315"/>
    <property type="project" value="MGI"/>
</dbReference>
<dbReference type="GO" id="GO:0001764">
    <property type="term" value="P:neuron migration"/>
    <property type="evidence" value="ECO:0000250"/>
    <property type="project" value="UniProtKB"/>
</dbReference>
<dbReference type="GO" id="GO:0036158">
    <property type="term" value="P:outer dynein arm assembly"/>
    <property type="evidence" value="ECO:0000315"/>
    <property type="project" value="UniProtKB"/>
</dbReference>
<dbReference type="GO" id="GO:0033146">
    <property type="term" value="P:regulation of intracellular estrogen receptor signaling pathway"/>
    <property type="evidence" value="ECO:0000250"/>
    <property type="project" value="UniProtKB"/>
</dbReference>
<dbReference type="GO" id="GO:0061136">
    <property type="term" value="P:regulation of proteasomal protein catabolic process"/>
    <property type="evidence" value="ECO:0000250"/>
    <property type="project" value="UniProtKB"/>
</dbReference>
<dbReference type="CDD" id="cd06469">
    <property type="entry name" value="p23_DYX1C1_like"/>
    <property type="match status" value="1"/>
</dbReference>
<dbReference type="FunFam" id="1.25.40.10:FF:000176">
    <property type="entry name" value="dynein assembly factor 4, axonemal isoform X1"/>
    <property type="match status" value="1"/>
</dbReference>
<dbReference type="FunFam" id="2.60.40.790:FF:000015">
    <property type="entry name" value="dynein assembly factor 4, axonemal isoform X1"/>
    <property type="match status" value="1"/>
</dbReference>
<dbReference type="Gene3D" id="2.60.40.790">
    <property type="match status" value="1"/>
</dbReference>
<dbReference type="Gene3D" id="1.25.40.10">
    <property type="entry name" value="Tetratricopeptide repeat domain"/>
    <property type="match status" value="1"/>
</dbReference>
<dbReference type="InterPro" id="IPR007052">
    <property type="entry name" value="CS_dom"/>
</dbReference>
<dbReference type="InterPro" id="IPR037894">
    <property type="entry name" value="CS_DYX1C1"/>
</dbReference>
<dbReference type="InterPro" id="IPR052004">
    <property type="entry name" value="Dynein_assembly_factor_4"/>
</dbReference>
<dbReference type="InterPro" id="IPR008978">
    <property type="entry name" value="HSP20-like_chaperone"/>
</dbReference>
<dbReference type="InterPro" id="IPR011990">
    <property type="entry name" value="TPR-like_helical_dom_sf"/>
</dbReference>
<dbReference type="InterPro" id="IPR019734">
    <property type="entry name" value="TPR_rpt"/>
</dbReference>
<dbReference type="PANTHER" id="PTHR46492">
    <property type="entry name" value="DYNEIN ASSEMBLY FACTOR 4, AXONEMAL"/>
    <property type="match status" value="1"/>
</dbReference>
<dbReference type="PANTHER" id="PTHR46492:SF1">
    <property type="entry name" value="DYNEIN AXONEMAL ASSEMBLY FACTOR 4"/>
    <property type="match status" value="1"/>
</dbReference>
<dbReference type="Pfam" id="PF04969">
    <property type="entry name" value="CS"/>
    <property type="match status" value="1"/>
</dbReference>
<dbReference type="SMART" id="SM00028">
    <property type="entry name" value="TPR"/>
    <property type="match status" value="3"/>
</dbReference>
<dbReference type="SUPFAM" id="SSF49764">
    <property type="entry name" value="HSP20-like chaperones"/>
    <property type="match status" value="1"/>
</dbReference>
<dbReference type="SUPFAM" id="SSF48452">
    <property type="entry name" value="TPR-like"/>
    <property type="match status" value="1"/>
</dbReference>
<dbReference type="PROSITE" id="PS51203">
    <property type="entry name" value="CS"/>
    <property type="match status" value="1"/>
</dbReference>
<dbReference type="PROSITE" id="PS50005">
    <property type="entry name" value="TPR"/>
    <property type="match status" value="3"/>
</dbReference>
<dbReference type="PROSITE" id="PS50293">
    <property type="entry name" value="TPR_REGION"/>
    <property type="match status" value="1"/>
</dbReference>
<gene>
    <name evidence="4" type="primary">Dnaaf4</name>
    <name type="synonym">Dyx1c1</name>
    <name type="synonym">Ekn1</name>
</gene>
<comment type="function">
    <text evidence="4 7">Involved in neuronal migration during development of the cerebral neocortex. May regulate the stability and proteasomal degradation of the estrogen receptors that play an important role in neuronal differentiation, survival and plasticity (By similarity). Axonemal dynein assembly factor required for ciliary motility.</text>
</comment>
<comment type="subunit">
    <text evidence="4 7">Interacts with ZMYND10 (By similarity). Interacts with ESR1 and ESR2. Interacts with STUB1 (By similarity). Interacts with DNAAF2 (By similarity). Interacts with CCT3, CCT4, CCT5 and CCT8 (PubMed:23872636). Interacts with DNAAF6/PIH1D3 (By similarity).</text>
</comment>
<comment type="subcellular location">
    <subcellularLocation>
        <location evidence="4">Nucleus</location>
    </subcellularLocation>
    <subcellularLocation>
        <location evidence="7">Cytoplasm</location>
    </subcellularLocation>
    <subcellularLocation>
        <location evidence="3">Dynein axonemal particle</location>
    </subcellularLocation>
    <subcellularLocation>
        <location evidence="2">Cell projection</location>
        <location evidence="2">Neuron projection</location>
    </subcellularLocation>
</comment>